<sequence>MARIAGIDLPKEKRVEIGLTYIYGIGLPTSQKILKETGVNSDTRVKDLTEEEVNLLRNYIKNLKIEGDLRREVALNIKRLIEIGSYRGIRHRKGLPVRGQKTKTNARTRKGPKKLVGAKKKSK</sequence>
<reference key="1">
    <citation type="submission" date="2005-09" db="EMBL/GenBank/DDBJ databases">
        <title>Complete genome sequence of Clostridium kluyveri and comparative genomics of Clostridia species.</title>
        <authorList>
            <person name="Inui M."/>
            <person name="Nonaka H."/>
            <person name="Shinoda Y."/>
            <person name="Ikenaga Y."/>
            <person name="Abe M."/>
            <person name="Naito K."/>
            <person name="Vertes A.A."/>
            <person name="Yukawa H."/>
        </authorList>
    </citation>
    <scope>NUCLEOTIDE SEQUENCE [LARGE SCALE GENOMIC DNA]</scope>
    <source>
        <strain>NBRC 12016</strain>
    </source>
</reference>
<feature type="chain" id="PRO_1000165614" description="Small ribosomal subunit protein uS13">
    <location>
        <begin position="1"/>
        <end position="123"/>
    </location>
</feature>
<feature type="region of interest" description="Disordered" evidence="2">
    <location>
        <begin position="92"/>
        <end position="123"/>
    </location>
</feature>
<comment type="function">
    <text evidence="1">Located at the top of the head of the 30S subunit, it contacts several helices of the 16S rRNA. In the 70S ribosome it contacts the 23S rRNA (bridge B1a) and protein L5 of the 50S subunit (bridge B1b), connecting the 2 subunits; these bridges are implicated in subunit movement. Contacts the tRNAs in the A and P-sites.</text>
</comment>
<comment type="subunit">
    <text evidence="1">Part of the 30S ribosomal subunit. Forms a loose heterodimer with protein S19. Forms two bridges to the 50S subunit in the 70S ribosome.</text>
</comment>
<comment type="similarity">
    <text evidence="1">Belongs to the universal ribosomal protein uS13 family.</text>
</comment>
<protein>
    <recommendedName>
        <fullName evidence="1">Small ribosomal subunit protein uS13</fullName>
    </recommendedName>
    <alternativeName>
        <fullName evidence="3">30S ribosomal protein S13</fullName>
    </alternativeName>
</protein>
<organism>
    <name type="scientific">Clostridium kluyveri (strain NBRC 12016)</name>
    <dbReference type="NCBI Taxonomy" id="583346"/>
    <lineage>
        <taxon>Bacteria</taxon>
        <taxon>Bacillati</taxon>
        <taxon>Bacillota</taxon>
        <taxon>Clostridia</taxon>
        <taxon>Eubacteriales</taxon>
        <taxon>Clostridiaceae</taxon>
        <taxon>Clostridium</taxon>
    </lineage>
</organism>
<gene>
    <name evidence="1" type="primary">rpsM</name>
    <name type="ordered locus">CKR_0208</name>
</gene>
<evidence type="ECO:0000255" key="1">
    <source>
        <dbReference type="HAMAP-Rule" id="MF_01315"/>
    </source>
</evidence>
<evidence type="ECO:0000256" key="2">
    <source>
        <dbReference type="SAM" id="MobiDB-lite"/>
    </source>
</evidence>
<evidence type="ECO:0000305" key="3"/>
<proteinExistence type="inferred from homology"/>
<accession>B9DYD4</accession>
<dbReference type="EMBL" id="AP009049">
    <property type="protein sequence ID" value="BAH05259.1"/>
    <property type="molecule type" value="Genomic_DNA"/>
</dbReference>
<dbReference type="RefSeq" id="WP_011988828.1">
    <property type="nucleotide sequence ID" value="NC_011837.1"/>
</dbReference>
<dbReference type="SMR" id="B9DYD4"/>
<dbReference type="KEGG" id="ckr:CKR_0208"/>
<dbReference type="HOGENOM" id="CLU_103849_1_1_9"/>
<dbReference type="Proteomes" id="UP000007969">
    <property type="component" value="Chromosome"/>
</dbReference>
<dbReference type="GO" id="GO:0005829">
    <property type="term" value="C:cytosol"/>
    <property type="evidence" value="ECO:0007669"/>
    <property type="project" value="TreeGrafter"/>
</dbReference>
<dbReference type="GO" id="GO:0015935">
    <property type="term" value="C:small ribosomal subunit"/>
    <property type="evidence" value="ECO:0007669"/>
    <property type="project" value="TreeGrafter"/>
</dbReference>
<dbReference type="GO" id="GO:0019843">
    <property type="term" value="F:rRNA binding"/>
    <property type="evidence" value="ECO:0007669"/>
    <property type="project" value="UniProtKB-UniRule"/>
</dbReference>
<dbReference type="GO" id="GO:0003735">
    <property type="term" value="F:structural constituent of ribosome"/>
    <property type="evidence" value="ECO:0007669"/>
    <property type="project" value="InterPro"/>
</dbReference>
<dbReference type="GO" id="GO:0000049">
    <property type="term" value="F:tRNA binding"/>
    <property type="evidence" value="ECO:0007669"/>
    <property type="project" value="UniProtKB-UniRule"/>
</dbReference>
<dbReference type="GO" id="GO:0006412">
    <property type="term" value="P:translation"/>
    <property type="evidence" value="ECO:0007669"/>
    <property type="project" value="UniProtKB-UniRule"/>
</dbReference>
<dbReference type="FunFam" id="1.10.8.50:FF:000001">
    <property type="entry name" value="30S ribosomal protein S13"/>
    <property type="match status" value="1"/>
</dbReference>
<dbReference type="FunFam" id="4.10.910.10:FF:000001">
    <property type="entry name" value="30S ribosomal protein S13"/>
    <property type="match status" value="1"/>
</dbReference>
<dbReference type="Gene3D" id="1.10.8.50">
    <property type="match status" value="1"/>
</dbReference>
<dbReference type="Gene3D" id="4.10.910.10">
    <property type="entry name" value="30s ribosomal protein s13, domain 2"/>
    <property type="match status" value="1"/>
</dbReference>
<dbReference type="HAMAP" id="MF_01315">
    <property type="entry name" value="Ribosomal_uS13"/>
    <property type="match status" value="1"/>
</dbReference>
<dbReference type="InterPro" id="IPR027437">
    <property type="entry name" value="Rbsml_uS13_C"/>
</dbReference>
<dbReference type="InterPro" id="IPR001892">
    <property type="entry name" value="Ribosomal_uS13"/>
</dbReference>
<dbReference type="InterPro" id="IPR010979">
    <property type="entry name" value="Ribosomal_uS13-like_H2TH"/>
</dbReference>
<dbReference type="InterPro" id="IPR019980">
    <property type="entry name" value="Ribosomal_uS13_bac-type"/>
</dbReference>
<dbReference type="InterPro" id="IPR018269">
    <property type="entry name" value="Ribosomal_uS13_CS"/>
</dbReference>
<dbReference type="NCBIfam" id="TIGR03631">
    <property type="entry name" value="uS13_bact"/>
    <property type="match status" value="1"/>
</dbReference>
<dbReference type="PANTHER" id="PTHR10871">
    <property type="entry name" value="30S RIBOSOMAL PROTEIN S13/40S RIBOSOMAL PROTEIN S18"/>
    <property type="match status" value="1"/>
</dbReference>
<dbReference type="PANTHER" id="PTHR10871:SF1">
    <property type="entry name" value="SMALL RIBOSOMAL SUBUNIT PROTEIN US13M"/>
    <property type="match status" value="1"/>
</dbReference>
<dbReference type="Pfam" id="PF00416">
    <property type="entry name" value="Ribosomal_S13"/>
    <property type="match status" value="1"/>
</dbReference>
<dbReference type="PIRSF" id="PIRSF002134">
    <property type="entry name" value="Ribosomal_S13"/>
    <property type="match status" value="1"/>
</dbReference>
<dbReference type="SUPFAM" id="SSF46946">
    <property type="entry name" value="S13-like H2TH domain"/>
    <property type="match status" value="1"/>
</dbReference>
<dbReference type="PROSITE" id="PS00646">
    <property type="entry name" value="RIBOSOMAL_S13_1"/>
    <property type="match status" value="1"/>
</dbReference>
<dbReference type="PROSITE" id="PS50159">
    <property type="entry name" value="RIBOSOMAL_S13_2"/>
    <property type="match status" value="1"/>
</dbReference>
<keyword id="KW-0687">Ribonucleoprotein</keyword>
<keyword id="KW-0689">Ribosomal protein</keyword>
<keyword id="KW-0694">RNA-binding</keyword>
<keyword id="KW-0699">rRNA-binding</keyword>
<keyword id="KW-0820">tRNA-binding</keyword>
<name>RS13_CLOK1</name>